<keyword id="KW-0966">Cell projection</keyword>
<keyword id="KW-0968">Cytoplasmic vesicle</keyword>
<keyword id="KW-0903">Direct protein sequencing</keyword>
<keyword id="KW-1015">Disulfide bond</keyword>
<keyword id="KW-0325">Glycoprotein</keyword>
<keyword id="KW-0472">Membrane</keyword>
<keyword id="KW-0532">Neurotransmitter transport</keyword>
<keyword id="KW-0597">Phosphoprotein</keyword>
<keyword id="KW-1185">Reference proteome</keyword>
<keyword id="KW-0770">Synapse</keyword>
<keyword id="KW-0812">Transmembrane</keyword>
<keyword id="KW-1133">Transmembrane helix</keyword>
<keyword id="KW-0813">Transport</keyword>
<gene>
    <name type="primary">SLC18A2</name>
    <name type="synonym">VMAT2</name>
</gene>
<dbReference type="EMBL" id="U02876">
    <property type="protein sequence ID" value="AAA18333.1"/>
    <property type="molecule type" value="mRNA"/>
</dbReference>
<dbReference type="EMBL" id="X76380">
    <property type="protein sequence ID" value="CAA53970.1"/>
    <property type="molecule type" value="mRNA"/>
</dbReference>
<dbReference type="PIR" id="S41081">
    <property type="entry name" value="S41081"/>
</dbReference>
<dbReference type="RefSeq" id="NP_777078.1">
    <property type="nucleotide sequence ID" value="NM_174653.2"/>
</dbReference>
<dbReference type="SMR" id="Q27963"/>
<dbReference type="FunCoup" id="Q27963">
    <property type="interactions" value="252"/>
</dbReference>
<dbReference type="STRING" id="9913.ENSBTAP00000006221"/>
<dbReference type="BindingDB" id="Q27963"/>
<dbReference type="ChEMBL" id="CHEMBL4271"/>
<dbReference type="DrugCentral" id="Q27963"/>
<dbReference type="GlyCosmos" id="Q27963">
    <property type="glycosylation" value="3 sites, No reported glycans"/>
</dbReference>
<dbReference type="GlyGen" id="Q27963">
    <property type="glycosylation" value="3 sites"/>
</dbReference>
<dbReference type="PaxDb" id="9913-ENSBTAP00000006221"/>
<dbReference type="GeneID" id="282471"/>
<dbReference type="KEGG" id="bta:282471"/>
<dbReference type="CTD" id="6571"/>
<dbReference type="eggNOG" id="KOG3764">
    <property type="taxonomic scope" value="Eukaryota"/>
</dbReference>
<dbReference type="InParanoid" id="Q27963"/>
<dbReference type="OrthoDB" id="5086884at2759"/>
<dbReference type="PRO" id="PR:Q27963"/>
<dbReference type="Proteomes" id="UP000009136">
    <property type="component" value="Unplaced"/>
</dbReference>
<dbReference type="GO" id="GO:0030424">
    <property type="term" value="C:axon"/>
    <property type="evidence" value="ECO:0000250"/>
    <property type="project" value="UniProtKB"/>
</dbReference>
<dbReference type="GO" id="GO:0042583">
    <property type="term" value="C:chromaffin granule"/>
    <property type="evidence" value="ECO:0000314"/>
    <property type="project" value="AgBase"/>
</dbReference>
<dbReference type="GO" id="GO:0030425">
    <property type="term" value="C:dendrite"/>
    <property type="evidence" value="ECO:0000250"/>
    <property type="project" value="UniProtKB"/>
</dbReference>
<dbReference type="GO" id="GO:0030667">
    <property type="term" value="C:secretory granule membrane"/>
    <property type="evidence" value="ECO:0000250"/>
    <property type="project" value="UniProtKB"/>
</dbReference>
<dbReference type="GO" id="GO:0030672">
    <property type="term" value="C:synaptic vesicle membrane"/>
    <property type="evidence" value="ECO:0000250"/>
    <property type="project" value="UniProtKB"/>
</dbReference>
<dbReference type="GO" id="GO:0043195">
    <property type="term" value="C:terminal bouton"/>
    <property type="evidence" value="ECO:0000318"/>
    <property type="project" value="GO_Central"/>
</dbReference>
<dbReference type="GO" id="GO:0015311">
    <property type="term" value="F:monoamine:proton antiporter activity"/>
    <property type="evidence" value="ECO:0000314"/>
    <property type="project" value="UniProtKB"/>
</dbReference>
<dbReference type="GO" id="GO:0005335">
    <property type="term" value="F:serotonin:sodium:chloride symporter activity"/>
    <property type="evidence" value="ECO:0000318"/>
    <property type="project" value="GO_Central"/>
</dbReference>
<dbReference type="GO" id="GO:0042910">
    <property type="term" value="F:xenobiotic transmembrane transporter activity"/>
    <property type="evidence" value="ECO:0007669"/>
    <property type="project" value="InterPro"/>
</dbReference>
<dbReference type="GO" id="GO:0015842">
    <property type="term" value="P:aminergic neurotransmitter loading into synaptic vesicle"/>
    <property type="evidence" value="ECO:0000318"/>
    <property type="project" value="GO_Central"/>
</dbReference>
<dbReference type="GO" id="GO:0090494">
    <property type="term" value="P:dopamine uptake"/>
    <property type="evidence" value="ECO:0000314"/>
    <property type="project" value="UniProtKB"/>
</dbReference>
<dbReference type="GO" id="GO:0035864">
    <property type="term" value="P:response to potassium ion"/>
    <property type="evidence" value="ECO:0000314"/>
    <property type="project" value="AgBase"/>
</dbReference>
<dbReference type="GO" id="GO:0051610">
    <property type="term" value="P:serotonin uptake"/>
    <property type="evidence" value="ECO:0000314"/>
    <property type="project" value="UniProtKB"/>
</dbReference>
<dbReference type="GO" id="GO:0099123">
    <property type="term" value="P:somato-dendritic dopamine secretion"/>
    <property type="evidence" value="ECO:0000250"/>
    <property type="project" value="UniProtKB"/>
</dbReference>
<dbReference type="CDD" id="cd17384">
    <property type="entry name" value="MFS_SLC18A1_2_VAT1_2"/>
    <property type="match status" value="1"/>
</dbReference>
<dbReference type="FunFam" id="1.20.1250.20:FF:000083">
    <property type="entry name" value="synaptic vesicular amine transporter isoform X1"/>
    <property type="match status" value="1"/>
</dbReference>
<dbReference type="FunFam" id="1.20.1250.20:FF:000116">
    <property type="entry name" value="synaptic vesicular amine transporter isoform X2"/>
    <property type="match status" value="1"/>
</dbReference>
<dbReference type="Gene3D" id="1.20.1250.20">
    <property type="entry name" value="MFS general substrate transporter like domains"/>
    <property type="match status" value="2"/>
</dbReference>
<dbReference type="InterPro" id="IPR011701">
    <property type="entry name" value="MFS"/>
</dbReference>
<dbReference type="InterPro" id="IPR020846">
    <property type="entry name" value="MFS_dom"/>
</dbReference>
<dbReference type="InterPro" id="IPR036259">
    <property type="entry name" value="MFS_trans_sf"/>
</dbReference>
<dbReference type="InterPro" id="IPR050930">
    <property type="entry name" value="MFS_Vesicular_Transporter"/>
</dbReference>
<dbReference type="InterPro" id="IPR004734">
    <property type="entry name" value="Multidrug-R"/>
</dbReference>
<dbReference type="NCBIfam" id="TIGR00880">
    <property type="entry name" value="2_A_01_02"/>
    <property type="match status" value="1"/>
</dbReference>
<dbReference type="PANTHER" id="PTHR23506">
    <property type="entry name" value="GH10249P"/>
    <property type="match status" value="1"/>
</dbReference>
<dbReference type="PANTHER" id="PTHR23506:SF30">
    <property type="entry name" value="SYNAPTIC VESICULAR AMINE TRANSPORTER"/>
    <property type="match status" value="1"/>
</dbReference>
<dbReference type="Pfam" id="PF07690">
    <property type="entry name" value="MFS_1"/>
    <property type="match status" value="1"/>
</dbReference>
<dbReference type="SUPFAM" id="SSF103473">
    <property type="entry name" value="MFS general substrate transporter"/>
    <property type="match status" value="1"/>
</dbReference>
<dbReference type="PROSITE" id="PS50850">
    <property type="entry name" value="MFS"/>
    <property type="match status" value="1"/>
</dbReference>
<reference key="1">
    <citation type="journal article" date="1994" name="FEBS Lett.">
        <title>Cloning and functional expression of a tetrabenazine sensitive vesicular monoamine transporter from bovine chromaffin granules.</title>
        <authorList>
            <person name="Howell M.L."/>
            <person name="Shirvan A."/>
            <person name="Stern-Bach Y."/>
            <person name="Steiner-Mordach S."/>
            <person name="Dean G.E."/>
            <person name="Schuldiner S."/>
        </authorList>
    </citation>
    <scope>NUCLEOTIDE SEQUENCE [MRNA]</scope>
    <scope>FUNCTION</scope>
    <scope>TRANSPORT ACTIVITY</scope>
</reference>
<reference key="2">
    <citation type="journal article" date="1993" name="FEBS Lett.">
        <title>Expression and regulation of the bovine vesicular monoamine transporter gene.</title>
        <authorList>
            <person name="Krejci E."/>
            <person name="Gasnier B."/>
            <person name="Botton D."/>
            <person name="Isambert M.-F."/>
            <person name="Sagne C."/>
            <person name="Gagnon J."/>
            <person name="Massoulie J."/>
            <person name="Henry J.-P."/>
        </authorList>
    </citation>
    <scope>NUCLEOTIDE SEQUENCE [MRNA]</scope>
    <source>
        <tissue>Adrenal medulla</tissue>
    </source>
</reference>
<reference key="3">
    <citation type="journal article" date="1992" name="Proc. Natl. Acad. Sci. U.S.A.">
        <title>Homology of a vesicular amine transporter to a gene conferring resistance to 1-methyl-4-phenylpyridinium.</title>
        <authorList>
            <person name="Stern-Bach Y."/>
            <person name="Keen J.N."/>
            <person name="Bejerano M."/>
            <person name="Steiner-Mordoch S."/>
            <person name="Wallach M."/>
            <person name="Findlay J.B.C."/>
            <person name="Schuldiner S."/>
        </authorList>
    </citation>
    <scope>PROTEIN SEQUENCE OF 3-30 AND 294-302</scope>
</reference>
<organism>
    <name type="scientific">Bos taurus</name>
    <name type="common">Bovine</name>
    <dbReference type="NCBI Taxonomy" id="9913"/>
    <lineage>
        <taxon>Eukaryota</taxon>
        <taxon>Metazoa</taxon>
        <taxon>Chordata</taxon>
        <taxon>Craniata</taxon>
        <taxon>Vertebrata</taxon>
        <taxon>Euteleostomi</taxon>
        <taxon>Mammalia</taxon>
        <taxon>Eutheria</taxon>
        <taxon>Laurasiatheria</taxon>
        <taxon>Artiodactyla</taxon>
        <taxon>Ruminantia</taxon>
        <taxon>Pecora</taxon>
        <taxon>Bovidae</taxon>
        <taxon>Bovinae</taxon>
        <taxon>Bos</taxon>
    </lineage>
</organism>
<sequence>MALSELALLRRLQESRHSRKLILFIVFLALLLDNMLLTVVVPIIPSYLYSIEHEKDALEIQTAKPGLTASAPGSFQNIFSYYDNSTMVTGNSTDHLQGALVHEATTQHMATNSSSASSDCPSEDKDLLNENVQVGLLFASKATVQLLTNPFIGLLTNRIGYPIPMFTGFCIMFISTVMFAFSRTYAFLLIARSLQGIGSSCSSVAGMGMLASVYTDDEERGNAMGIALGGLAMGVLVGPPFGSVLYEFVGKTAPFLVLAALVLLDGAIQLFVLQPSRVQPESQKGTPLTTLLRDPYILIAAGSICFANMGIAMLEPALPIWMMETMCSHKWQLGVAFLPASVSYLIGTNVFGILAHKMGRWLCALLGMIIVGMSILCIPLAKNIYGLIAPNFGVGFAIGMVDSSMMPIMGYLVDLRHVSVYGSVYAIADVAFCMGYAIGPSAGGAIAKAIGFPWLMTIIGIIDILFAPLCFFLRSPPAKEEKMAILMDHNCPIKTKMYTQNSSQSHPIGEDEESESD</sequence>
<evidence type="ECO:0000250" key="1"/>
<evidence type="ECO:0000250" key="2">
    <source>
        <dbReference type="UniProtKB" id="Q01827"/>
    </source>
</evidence>
<evidence type="ECO:0000250" key="3">
    <source>
        <dbReference type="UniProtKB" id="Q05940"/>
    </source>
</evidence>
<evidence type="ECO:0000250" key="4">
    <source>
        <dbReference type="UniProtKB" id="Q8BRU6"/>
    </source>
</evidence>
<evidence type="ECO:0000255" key="5"/>
<evidence type="ECO:0000269" key="6">
    <source>
    </source>
</evidence>
<evidence type="ECO:0000305" key="7"/>
<evidence type="ECO:0000305" key="8">
    <source>
    </source>
</evidence>
<name>VMAT2_BOVIN</name>
<comment type="function">
    <text evidence="2 4 6">Electrogenic antiporter that exchanges one cationic monoamine with two intravesicular protons across the membrane of secretory and synaptic vesicles. Uses the electrochemical proton gradient established by the V-type proton-pump ATPase to accumulate high concentrations of monoamines inside the vesicles prior to their release via exocytosis. Transports a variety of catecholamines such as dopamine, adrenaline and noradrenaline, histamine, and indolamines such as serotonin (PubMed:8307150). Regulates the transvesicular monoaminergic gradient that determines the quantal size. Mediates somatodendritic dopamine release in hippocampal neurons, likely as part of a regulated secretory pathway that integrates retrograde synaptic signals (By similarity). Acts as a primary transporter for striatal dopamine loading ensuring impulse-dependent release of dopamine at the synaptic cleft (By similarity). Responsible for histamine and serotonin storage and subsequent corelease from mast cell granules (By similarity).</text>
</comment>
<comment type="catalytic activity">
    <reaction evidence="6">
        <text>serotonin(in) + 2 H(+)(out) = serotonin(out) + 2 H(+)(in)</text>
        <dbReference type="Rhea" id="RHEA:73743"/>
        <dbReference type="ChEBI" id="CHEBI:15378"/>
        <dbReference type="ChEBI" id="CHEBI:350546"/>
    </reaction>
    <physiologicalReaction direction="left-to-right" evidence="8">
        <dbReference type="Rhea" id="RHEA:73744"/>
    </physiologicalReaction>
</comment>
<comment type="catalytic activity">
    <reaction evidence="6">
        <text>dopamine(in) + 2 H(+)(out) = dopamine(out) + 2 H(+)(in)</text>
        <dbReference type="Rhea" id="RHEA:73739"/>
        <dbReference type="ChEBI" id="CHEBI:15378"/>
        <dbReference type="ChEBI" id="CHEBI:59905"/>
    </reaction>
    <physiologicalReaction direction="left-to-right" evidence="8">
        <dbReference type="Rhea" id="RHEA:73740"/>
    </physiologicalReaction>
</comment>
<comment type="catalytic activity">
    <reaction evidence="2">
        <text>histamine(in) + 2 H(+)(out) = histamine(out) + 2 H(+)(in)</text>
        <dbReference type="Rhea" id="RHEA:73755"/>
        <dbReference type="ChEBI" id="CHEBI:15378"/>
        <dbReference type="ChEBI" id="CHEBI:58432"/>
    </reaction>
    <physiologicalReaction direction="left-to-right" evidence="2">
        <dbReference type="Rhea" id="RHEA:73756"/>
    </physiologicalReaction>
</comment>
<comment type="activity regulation">
    <text evidence="3">Strongly inhibited by reserpine and tetrabenazine (By similarity). Also inhibited to a lesser extent by ketanserin and fenfluramine (By similarity). Reserpine and ketanserin inhibit by blocking the substrate-binding pocket (By similarity). Tetrabenazine traps SLC18A2/VMAT2 in an occluded conformation and its inhibition is specific to SLC18A2/VMAT2 but not SLC18A1/VMAT1 (By similarity).</text>
</comment>
<comment type="subunit">
    <text evidence="4">Interacts with SLC6A3.</text>
</comment>
<comment type="subcellular location">
    <subcellularLocation>
        <location evidence="2">Cytoplasmic vesicle</location>
        <location evidence="2">Secretory vesicle</location>
        <location evidence="2">Synaptic vesicle membrane</location>
        <topology evidence="5">Multi-pass membrane protein</topology>
    </subcellularLocation>
    <subcellularLocation>
        <location evidence="2">Cytoplasmic vesicle</location>
        <location evidence="2">Secretory vesicle membrane</location>
        <topology evidence="5">Multi-pass membrane protein</topology>
    </subcellularLocation>
    <subcellularLocation>
        <location evidence="2">Cell projection</location>
        <location evidence="2">Axon</location>
    </subcellularLocation>
    <subcellularLocation>
        <location evidence="2">Cell projection</location>
        <location evidence="2">Dendrite</location>
    </subcellularLocation>
    <text evidence="2">Sorted to large dense core granules in neuroendocrine cells, presumably at the level of the trans-Golgi network. In neurons it is predominantly detected in somatodendritic tubulovesicular membranes, a distinct population of secretory vesicles that undergo calcium-dependent exocytosis in axons and dendrites upon depolarization. Localized at synaptic vesicles in axons.</text>
</comment>
<comment type="similarity">
    <text evidence="7">Belongs to the major facilitator superfamily. Vesicular transporter family.</text>
</comment>
<feature type="chain" id="PRO_0000127513" description="Synaptic vesicular amine transporter">
    <location>
        <begin position="1"/>
        <end position="517"/>
    </location>
</feature>
<feature type="topological domain" description="Cytoplasmic" evidence="3">
    <location>
        <begin position="1"/>
        <end position="20"/>
    </location>
</feature>
<feature type="transmembrane region" description="Helical; Name=1" evidence="3">
    <location>
        <begin position="21"/>
        <end position="41"/>
    </location>
</feature>
<feature type="topological domain" description="Extracellular" evidence="3">
    <location>
        <begin position="42"/>
        <end position="132"/>
    </location>
</feature>
<feature type="transmembrane region" description="Helical; Name=2" evidence="3">
    <location>
        <begin position="133"/>
        <end position="153"/>
    </location>
</feature>
<feature type="topological domain" description="Cytoplasmic" evidence="3">
    <location>
        <begin position="154"/>
        <end position="162"/>
    </location>
</feature>
<feature type="transmembrane region" description="Helical; Name=3" evidence="3">
    <location>
        <begin position="163"/>
        <end position="183"/>
    </location>
</feature>
<feature type="topological domain" description="Extracellular" evidence="3">
    <location>
        <begin position="184"/>
        <end position="192"/>
    </location>
</feature>
<feature type="transmembrane region" description="Helical; Name=4" evidence="3">
    <location>
        <begin position="193"/>
        <end position="213"/>
    </location>
</feature>
<feature type="topological domain" description="Cytoplasmic" evidence="3">
    <location>
        <begin position="214"/>
        <end position="222"/>
    </location>
</feature>
<feature type="transmembrane region" description="Helical; Name=5" evidence="3">
    <location>
        <begin position="223"/>
        <end position="245"/>
    </location>
</feature>
<feature type="topological domain" description="Extracellular" evidence="3">
    <location>
        <begin position="246"/>
        <end position="251"/>
    </location>
</feature>
<feature type="transmembrane region" description="Helical; Name=6" evidence="3">
    <location>
        <begin position="252"/>
        <end position="274"/>
    </location>
</feature>
<feature type="topological domain" description="Cytoplasmic" evidence="3">
    <location>
        <begin position="275"/>
        <end position="294"/>
    </location>
</feature>
<feature type="transmembrane region" description="Helical; Name=7" evidence="3">
    <location>
        <begin position="295"/>
        <end position="314"/>
    </location>
</feature>
<feature type="topological domain" description="Extracellular" evidence="3">
    <location>
        <begin position="315"/>
        <end position="331"/>
    </location>
</feature>
<feature type="transmembrane region" description="Helical; Name=8" evidence="3">
    <location>
        <begin position="332"/>
        <end position="355"/>
    </location>
</feature>
<feature type="topological domain" description="Cytoplasmic" evidence="3">
    <location>
        <begin position="356"/>
        <end position="360"/>
    </location>
</feature>
<feature type="transmembrane region" description="Helical; Name=9" evidence="3">
    <location>
        <begin position="361"/>
        <end position="381"/>
    </location>
</feature>
<feature type="topological domain" description="Extracellular" evidence="3">
    <location>
        <begin position="382"/>
        <end position="392"/>
    </location>
</feature>
<feature type="transmembrane region" description="Helical; Name=10" evidence="3">
    <location>
        <begin position="393"/>
        <end position="413"/>
    </location>
</feature>
<feature type="topological domain" description="Cytoplasmic" evidence="3">
    <location>
        <begin position="414"/>
        <end position="417"/>
    </location>
</feature>
<feature type="transmembrane region" description="Helical; Name=11" evidence="3">
    <location>
        <begin position="418"/>
        <end position="438"/>
    </location>
</feature>
<feature type="topological domain" description="Extracellular" evidence="3">
    <location>
        <begin position="439"/>
        <end position="443"/>
    </location>
</feature>
<feature type="transmembrane region" description="Helical; Name=12" evidence="3">
    <location>
        <begin position="444"/>
        <end position="465"/>
    </location>
</feature>
<feature type="topological domain" description="Cytoplasmic" evidence="3">
    <location>
        <begin position="466"/>
        <end position="517"/>
    </location>
</feature>
<feature type="binding site" evidence="3">
    <location>
        <position position="231"/>
    </location>
    <ligand>
        <name>serotonin</name>
        <dbReference type="ChEBI" id="CHEBI:350546"/>
    </ligand>
</feature>
<feature type="binding site" evidence="3">
    <location>
        <position position="235"/>
    </location>
    <ligand>
        <name>serotonin</name>
        <dbReference type="ChEBI" id="CHEBI:350546"/>
    </ligand>
</feature>
<feature type="binding site" evidence="3">
    <location>
        <position position="308"/>
    </location>
    <ligand>
        <name>serotonin</name>
        <dbReference type="ChEBI" id="CHEBI:350546"/>
    </ligand>
</feature>
<feature type="binding site" evidence="3">
    <location>
        <position position="311"/>
    </location>
    <ligand>
        <name>serotonin</name>
        <dbReference type="ChEBI" id="CHEBI:350546"/>
    </ligand>
</feature>
<feature type="binding site" evidence="3">
    <location>
        <position position="315"/>
    </location>
    <ligand>
        <name>serotonin</name>
        <dbReference type="ChEBI" id="CHEBI:350546"/>
    </ligand>
</feature>
<feature type="binding site" evidence="3">
    <location>
        <position position="337"/>
    </location>
    <ligand>
        <name>serotonin</name>
        <dbReference type="ChEBI" id="CHEBI:350546"/>
    </ligand>
</feature>
<feature type="binding site" evidence="3">
    <location>
        <position position="344"/>
    </location>
    <ligand>
        <name>serotonin</name>
        <dbReference type="ChEBI" id="CHEBI:350546"/>
    </ligand>
</feature>
<feature type="binding site" evidence="3">
    <location>
        <position position="402"/>
    </location>
    <ligand>
        <name>serotonin</name>
        <dbReference type="ChEBI" id="CHEBI:350546"/>
    </ligand>
</feature>
<feature type="binding site" evidence="3">
    <location>
        <position position="436"/>
    </location>
    <ligand>
        <name>serotonin</name>
        <dbReference type="ChEBI" id="CHEBI:350546"/>
    </ligand>
</feature>
<feature type="modified residue" description="Phosphoserine; by CK2" evidence="2">
    <location>
        <position position="514"/>
    </location>
</feature>
<feature type="modified residue" description="Phosphoserine; by CK2" evidence="2">
    <location>
        <position position="516"/>
    </location>
</feature>
<feature type="glycosylation site" description="N-linked (GlcNAc...) asparagine" evidence="5">
    <location>
        <position position="84"/>
    </location>
</feature>
<feature type="glycosylation site" description="N-linked (GlcNAc...) asparagine" evidence="5">
    <location>
        <position position="91"/>
    </location>
</feature>
<feature type="glycosylation site" description="N-linked (GlcNAc...) asparagine" evidence="5">
    <location>
        <position position="112"/>
    </location>
</feature>
<feature type="disulfide bond" evidence="1">
    <location>
        <begin position="120"/>
        <end position="327"/>
    </location>
</feature>
<feature type="sequence conflict" description="In Ref. 2; CAA53970." evidence="7" ref="2">
    <original>A</original>
    <variation>T</variation>
    <location>
        <position position="63"/>
    </location>
</feature>
<feature type="sequence conflict" description="In Ref. 2; CAA53970." evidence="7" ref="2">
    <original>T</original>
    <variation>S</variation>
    <location>
        <position position="184"/>
    </location>
</feature>
<feature type="sequence conflict" description="In Ref. 3; AA sequence." evidence="7" ref="3">
    <original>Y</original>
    <variation>Q</variation>
    <location>
        <position position="296"/>
    </location>
</feature>
<feature type="sequence conflict" description="In Ref. 3; AA sequence." evidence="7" ref="3">
    <original>A</original>
    <variation>K</variation>
    <location>
        <position position="301"/>
    </location>
</feature>
<feature type="sequence conflict" description="In Ref. 2; CAA53970." evidence="7" ref="2">
    <original>L</original>
    <variation>SF</variation>
    <location>
        <position position="465"/>
    </location>
</feature>
<feature type="sequence conflict" description="In Ref. 2; CAA53970." evidence="7" ref="2">
    <original>RSP</original>
    <variation>SKS</variation>
    <location>
        <begin position="474"/>
        <end position="476"/>
    </location>
</feature>
<protein>
    <recommendedName>
        <fullName>Synaptic vesicular amine transporter</fullName>
    </recommendedName>
    <alternativeName>
        <fullName>Monoamine transporter</fullName>
    </alternativeName>
    <alternativeName>
        <fullName>Solute carrier family 18 member 2</fullName>
    </alternativeName>
    <alternativeName>
        <fullName>Vesicular amine transporter 2</fullName>
        <shortName>VAT2</shortName>
    </alternativeName>
    <alternativeName>
        <fullName evidence="3">Vesicular monoamine transporter 2</fullName>
    </alternativeName>
</protein>
<proteinExistence type="evidence at protein level"/>
<accession>Q27963</accession>
<accession>Q28211</accession>